<protein>
    <recommendedName>
        <fullName evidence="1">Probable sugar efflux transporter</fullName>
    </recommendedName>
</protein>
<keyword id="KW-0997">Cell inner membrane</keyword>
<keyword id="KW-1003">Cell membrane</keyword>
<keyword id="KW-0472">Membrane</keyword>
<keyword id="KW-0762">Sugar transport</keyword>
<keyword id="KW-0812">Transmembrane</keyword>
<keyword id="KW-1133">Transmembrane helix</keyword>
<keyword id="KW-0813">Transport</keyword>
<proteinExistence type="inferred from homology"/>
<evidence type="ECO:0000255" key="1">
    <source>
        <dbReference type="HAMAP-Rule" id="MF_00517"/>
    </source>
</evidence>
<gene>
    <name evidence="1" type="primary">sotB</name>
    <name type="ordered locus">Hac_0393</name>
</gene>
<feature type="chain" id="PRO_1000050799" description="Probable sugar efflux transporter">
    <location>
        <begin position="1"/>
        <end position="391"/>
    </location>
</feature>
<feature type="transmembrane region" description="Helical" evidence="1">
    <location>
        <begin position="16"/>
        <end position="36"/>
    </location>
</feature>
<feature type="transmembrane region" description="Helical" evidence="1">
    <location>
        <begin position="51"/>
        <end position="71"/>
    </location>
</feature>
<feature type="transmembrane region" description="Helical" evidence="1">
    <location>
        <begin position="82"/>
        <end position="102"/>
    </location>
</feature>
<feature type="transmembrane region" description="Helical" evidence="1">
    <location>
        <begin position="103"/>
        <end position="123"/>
    </location>
</feature>
<feature type="transmembrane region" description="Helical" evidence="1">
    <location>
        <begin position="138"/>
        <end position="158"/>
    </location>
</feature>
<feature type="transmembrane region" description="Helical" evidence="1">
    <location>
        <begin position="170"/>
        <end position="190"/>
    </location>
</feature>
<feature type="transmembrane region" description="Helical" evidence="1">
    <location>
        <begin position="210"/>
        <end position="230"/>
    </location>
</feature>
<feature type="transmembrane region" description="Helical" evidence="1">
    <location>
        <begin position="247"/>
        <end position="267"/>
    </location>
</feature>
<feature type="transmembrane region" description="Helical" evidence="1">
    <location>
        <begin position="277"/>
        <end position="297"/>
    </location>
</feature>
<feature type="transmembrane region" description="Helical" evidence="1">
    <location>
        <begin position="300"/>
        <end position="320"/>
    </location>
</feature>
<feature type="transmembrane region" description="Helical" evidence="1">
    <location>
        <begin position="338"/>
        <end position="358"/>
    </location>
</feature>
<feature type="transmembrane region" description="Helical" evidence="1">
    <location>
        <begin position="361"/>
        <end position="381"/>
    </location>
</feature>
<name>SOTB_HELAH</name>
<reference key="1">
    <citation type="journal article" date="2006" name="PLoS Genet.">
        <title>Who ate whom? Adaptive Helicobacter genomic changes that accompanied a host jump from early humans to large felines.</title>
        <authorList>
            <person name="Eppinger M."/>
            <person name="Baar C."/>
            <person name="Linz B."/>
            <person name="Raddatz G."/>
            <person name="Lanz C."/>
            <person name="Keller H."/>
            <person name="Morelli G."/>
            <person name="Gressmann H."/>
            <person name="Achtman M."/>
            <person name="Schuster S.C."/>
        </authorList>
    </citation>
    <scope>NUCLEOTIDE SEQUENCE [LARGE SCALE GENOMIC DNA]</scope>
    <source>
        <strain>Sheeba</strain>
    </source>
</reference>
<dbReference type="EMBL" id="AM260522">
    <property type="protein sequence ID" value="CAJ99229.1"/>
    <property type="molecule type" value="Genomic_DNA"/>
</dbReference>
<dbReference type="RefSeq" id="WP_011577343.1">
    <property type="nucleotide sequence ID" value="NC_008229.1"/>
</dbReference>
<dbReference type="SMR" id="Q17YP7"/>
<dbReference type="STRING" id="382638.Hac_0393"/>
<dbReference type="GeneID" id="31757899"/>
<dbReference type="KEGG" id="hac:Hac_0393"/>
<dbReference type="eggNOG" id="COG2814">
    <property type="taxonomic scope" value="Bacteria"/>
</dbReference>
<dbReference type="HOGENOM" id="CLU_001265_61_1_7"/>
<dbReference type="OrthoDB" id="9788453at2"/>
<dbReference type="BioCyc" id="HACI382638:HAC_RS01775-MONOMER"/>
<dbReference type="Proteomes" id="UP000000775">
    <property type="component" value="Chromosome"/>
</dbReference>
<dbReference type="GO" id="GO:0005886">
    <property type="term" value="C:plasma membrane"/>
    <property type="evidence" value="ECO:0007669"/>
    <property type="project" value="UniProtKB-SubCell"/>
</dbReference>
<dbReference type="GO" id="GO:0015144">
    <property type="term" value="F:carbohydrate transmembrane transporter activity"/>
    <property type="evidence" value="ECO:0007669"/>
    <property type="project" value="UniProtKB-UniRule"/>
</dbReference>
<dbReference type="CDD" id="cd17324">
    <property type="entry name" value="MFS_NepI_like"/>
    <property type="match status" value="1"/>
</dbReference>
<dbReference type="Gene3D" id="1.20.1250.20">
    <property type="entry name" value="MFS general substrate transporter like domains"/>
    <property type="match status" value="1"/>
</dbReference>
<dbReference type="HAMAP" id="MF_00517">
    <property type="entry name" value="MFS_SotB"/>
    <property type="match status" value="1"/>
</dbReference>
<dbReference type="InterPro" id="IPR011701">
    <property type="entry name" value="MFS"/>
</dbReference>
<dbReference type="InterPro" id="IPR020846">
    <property type="entry name" value="MFS_dom"/>
</dbReference>
<dbReference type="InterPro" id="IPR050189">
    <property type="entry name" value="MFS_Efflux_Transporters"/>
</dbReference>
<dbReference type="InterPro" id="IPR036259">
    <property type="entry name" value="MFS_trans_sf"/>
</dbReference>
<dbReference type="InterPro" id="IPR023495">
    <property type="entry name" value="Sugar_effux_transptr_put"/>
</dbReference>
<dbReference type="NCBIfam" id="NF002921">
    <property type="entry name" value="PRK03545.1"/>
    <property type="match status" value="1"/>
</dbReference>
<dbReference type="PANTHER" id="PTHR43124">
    <property type="entry name" value="PURINE EFFLUX PUMP PBUE"/>
    <property type="match status" value="1"/>
</dbReference>
<dbReference type="PANTHER" id="PTHR43124:SF4">
    <property type="entry name" value="SUGAR EFFLUX TRANSPORTER"/>
    <property type="match status" value="1"/>
</dbReference>
<dbReference type="Pfam" id="PF07690">
    <property type="entry name" value="MFS_1"/>
    <property type="match status" value="1"/>
</dbReference>
<dbReference type="SUPFAM" id="SSF103473">
    <property type="entry name" value="MFS general substrate transporter"/>
    <property type="match status" value="1"/>
</dbReference>
<dbReference type="PROSITE" id="PS50850">
    <property type="entry name" value="MFS"/>
    <property type="match status" value="1"/>
</dbReference>
<organism>
    <name type="scientific">Helicobacter acinonychis (strain Sheeba)</name>
    <dbReference type="NCBI Taxonomy" id="382638"/>
    <lineage>
        <taxon>Bacteria</taxon>
        <taxon>Pseudomonadati</taxon>
        <taxon>Campylobacterota</taxon>
        <taxon>Epsilonproteobacteria</taxon>
        <taxon>Campylobacterales</taxon>
        <taxon>Helicobacteraceae</taxon>
        <taxon>Helicobacter</taxon>
    </lineage>
</organism>
<sequence>MMITKQSYKKLALMRVFVFSLSAFIFNTTEFVPIALLSDIAKSFEMESASVGLMITLYAWIVSLGSLPLMLLSAKIERKRLLLFLFGLFIVSHILSVVAWDFWVLLISRMGIALAHSVFWSITASLVIRVAPIGRKQQALGLLALGSSLAMILGLPLGRIIGQMLDWRSTFGMIGGVALLVALLMYRLLPSLPSRNAGTLSSLPVLMKRPLLVGIYLLVILAISGHFTTYSYIEPFIIQISQFSPEVATLMLFVFGLAGVMGSFLFGRFYEKNPKKFIACAIILVLCPQLLLFSFKHLEWVIFLQIFLWGIGITSLGISLQMRVLQLAPNATDVASAIFSGSYNVGIGSGALFGSIVIHQLGLGYIGFVGGALGLLALFWFNFITIKFGAK</sequence>
<comment type="function">
    <text evidence="1">Involved in the efflux of sugars. The physiological role may be the reduction of the intracellular concentration of toxic sugars or sugar metabolites.</text>
</comment>
<comment type="subcellular location">
    <subcellularLocation>
        <location evidence="1">Cell inner membrane</location>
        <topology evidence="1">Multi-pass membrane protein</topology>
    </subcellularLocation>
</comment>
<comment type="similarity">
    <text evidence="1">Belongs to the major facilitator superfamily. SotB (TC 2.A.1.2) family.</text>
</comment>
<accession>Q17YP7</accession>